<dbReference type="EMBL" id="U76205">
    <property type="protein sequence ID" value="AAB19203.1"/>
    <property type="molecule type" value="mRNA"/>
</dbReference>
<dbReference type="EMBL" id="D89655">
    <property type="protein sequence ID" value="BAA14004.1"/>
    <property type="molecule type" value="mRNA"/>
</dbReference>
<dbReference type="EMBL" id="AB002151">
    <property type="protein sequence ID" value="BAA74541.1"/>
    <property type="molecule type" value="mRNA"/>
</dbReference>
<dbReference type="EMBL" id="BC076504">
    <property type="protein sequence ID" value="AAH76504.1"/>
    <property type="molecule type" value="mRNA"/>
</dbReference>
<dbReference type="PIR" id="JC5533">
    <property type="entry name" value="JC5533"/>
</dbReference>
<dbReference type="RefSeq" id="NP_113729.1">
    <property type="nucleotide sequence ID" value="NM_031541.2"/>
</dbReference>
<dbReference type="SMR" id="P97943"/>
<dbReference type="FunCoup" id="P97943">
    <property type="interactions" value="651"/>
</dbReference>
<dbReference type="STRING" id="10116.ENSRNOP00000060874"/>
<dbReference type="GlyCosmos" id="P97943">
    <property type="glycosylation" value="10 sites, No reported glycans"/>
</dbReference>
<dbReference type="GlyGen" id="P97943">
    <property type="glycosylation" value="10 sites"/>
</dbReference>
<dbReference type="iPTMnet" id="P97943"/>
<dbReference type="PhosphoSitePlus" id="P97943"/>
<dbReference type="SwissPalm" id="P97943"/>
<dbReference type="PaxDb" id="10116-ENSRNOP00000060874"/>
<dbReference type="GeneID" id="25073"/>
<dbReference type="KEGG" id="rno:25073"/>
<dbReference type="UCSC" id="RGD:2302">
    <property type="organism name" value="rat"/>
</dbReference>
<dbReference type="AGR" id="RGD:2302"/>
<dbReference type="CTD" id="949"/>
<dbReference type="RGD" id="2302">
    <property type="gene designation" value="Scarb1"/>
</dbReference>
<dbReference type="VEuPathDB" id="HostDB:ENSRNOG00000000981"/>
<dbReference type="eggNOG" id="KOG3776">
    <property type="taxonomic scope" value="Eukaryota"/>
</dbReference>
<dbReference type="HOGENOM" id="CLU_019853_4_0_1"/>
<dbReference type="InParanoid" id="P97943"/>
<dbReference type="PhylomeDB" id="P97943"/>
<dbReference type="TreeFam" id="TF317925"/>
<dbReference type="Reactome" id="R-RNO-3000471">
    <property type="pathway name" value="Scavenging by Class B Receptors"/>
</dbReference>
<dbReference type="Reactome" id="R-RNO-8964011">
    <property type="pathway name" value="HDL clearance"/>
</dbReference>
<dbReference type="PRO" id="PR:P97943"/>
<dbReference type="Proteomes" id="UP000002494">
    <property type="component" value="Chromosome 12"/>
</dbReference>
<dbReference type="Bgee" id="ENSRNOG00000000981">
    <property type="expression patterns" value="Expressed in ovary and 20 other cell types or tissues"/>
</dbReference>
<dbReference type="ExpressionAtlas" id="P97943">
    <property type="expression patterns" value="baseline and differential"/>
</dbReference>
<dbReference type="GO" id="GO:0016324">
    <property type="term" value="C:apical plasma membrane"/>
    <property type="evidence" value="ECO:0000266"/>
    <property type="project" value="RGD"/>
</dbReference>
<dbReference type="GO" id="GO:0016323">
    <property type="term" value="C:basolateral plasma membrane"/>
    <property type="evidence" value="ECO:0000266"/>
    <property type="project" value="RGD"/>
</dbReference>
<dbReference type="GO" id="GO:0005901">
    <property type="term" value="C:caveola"/>
    <property type="evidence" value="ECO:0000266"/>
    <property type="project" value="RGD"/>
</dbReference>
<dbReference type="GO" id="GO:0009986">
    <property type="term" value="C:cell surface"/>
    <property type="evidence" value="ECO:0000314"/>
    <property type="project" value="RGD"/>
</dbReference>
<dbReference type="GO" id="GO:0005737">
    <property type="term" value="C:cytoplasm"/>
    <property type="evidence" value="ECO:0000266"/>
    <property type="project" value="RGD"/>
</dbReference>
<dbReference type="GO" id="GO:0016020">
    <property type="term" value="C:membrane"/>
    <property type="evidence" value="ECO:0000266"/>
    <property type="project" value="RGD"/>
</dbReference>
<dbReference type="GO" id="GO:0031528">
    <property type="term" value="C:microvillus membrane"/>
    <property type="evidence" value="ECO:0000314"/>
    <property type="project" value="RGD"/>
</dbReference>
<dbReference type="GO" id="GO:0005886">
    <property type="term" value="C:plasma membrane"/>
    <property type="evidence" value="ECO:0000250"/>
    <property type="project" value="BHF-UCL"/>
</dbReference>
<dbReference type="GO" id="GO:0001540">
    <property type="term" value="F:amyloid-beta binding"/>
    <property type="evidence" value="ECO:0000266"/>
    <property type="project" value="RGD"/>
</dbReference>
<dbReference type="GO" id="GO:0034186">
    <property type="term" value="F:apolipoprotein A-I binding"/>
    <property type="evidence" value="ECO:0000266"/>
    <property type="project" value="RGD"/>
</dbReference>
<dbReference type="GO" id="GO:0034185">
    <property type="term" value="F:apolipoprotein binding"/>
    <property type="evidence" value="ECO:0000266"/>
    <property type="project" value="RGD"/>
</dbReference>
<dbReference type="GO" id="GO:0008035">
    <property type="term" value="F:high-density lipoprotein particle binding"/>
    <property type="evidence" value="ECO:0000266"/>
    <property type="project" value="RGD"/>
</dbReference>
<dbReference type="GO" id="GO:0070506">
    <property type="term" value="F:high-density lipoprotein particle receptor activity"/>
    <property type="evidence" value="ECO:0000250"/>
    <property type="project" value="BHF-UCL"/>
</dbReference>
<dbReference type="GO" id="GO:0042802">
    <property type="term" value="F:identical protein binding"/>
    <property type="evidence" value="ECO:0000353"/>
    <property type="project" value="RGD"/>
</dbReference>
<dbReference type="GO" id="GO:0008289">
    <property type="term" value="F:lipid binding"/>
    <property type="evidence" value="ECO:0000318"/>
    <property type="project" value="GO_Central"/>
</dbReference>
<dbReference type="GO" id="GO:0005319">
    <property type="term" value="F:lipid transporter activity"/>
    <property type="evidence" value="ECO:0000304"/>
    <property type="project" value="RGD"/>
</dbReference>
<dbReference type="GO" id="GO:0001530">
    <property type="term" value="F:lipopolysaccharide binding"/>
    <property type="evidence" value="ECO:0000266"/>
    <property type="project" value="RGD"/>
</dbReference>
<dbReference type="GO" id="GO:0001875">
    <property type="term" value="F:lipopolysaccharide immune receptor activity"/>
    <property type="evidence" value="ECO:0000266"/>
    <property type="project" value="RGD"/>
</dbReference>
<dbReference type="GO" id="GO:0030169">
    <property type="term" value="F:low-density lipoprotein particle binding"/>
    <property type="evidence" value="ECO:0000250"/>
    <property type="project" value="BHF-UCL"/>
</dbReference>
<dbReference type="GO" id="GO:0001786">
    <property type="term" value="F:phosphatidylserine binding"/>
    <property type="evidence" value="ECO:0000314"/>
    <property type="project" value="BHF-UCL"/>
</dbReference>
<dbReference type="GO" id="GO:0005044">
    <property type="term" value="F:scavenger receptor activity"/>
    <property type="evidence" value="ECO:0000318"/>
    <property type="project" value="GO_Central"/>
</dbReference>
<dbReference type="GO" id="GO:0046222">
    <property type="term" value="P:aflatoxin metabolic process"/>
    <property type="evidence" value="ECO:0000270"/>
    <property type="project" value="RGD"/>
</dbReference>
<dbReference type="GO" id="GO:0006702">
    <property type="term" value="P:androgen biosynthetic process"/>
    <property type="evidence" value="ECO:0000314"/>
    <property type="project" value="RGD"/>
</dbReference>
<dbReference type="GO" id="GO:0043534">
    <property type="term" value="P:blood vessel endothelial cell migration"/>
    <property type="evidence" value="ECO:0000266"/>
    <property type="project" value="RGD"/>
</dbReference>
<dbReference type="GO" id="GO:0006707">
    <property type="term" value="P:cholesterol catabolic process"/>
    <property type="evidence" value="ECO:0000266"/>
    <property type="project" value="RGD"/>
</dbReference>
<dbReference type="GO" id="GO:0033344">
    <property type="term" value="P:cholesterol efflux"/>
    <property type="evidence" value="ECO:0000266"/>
    <property type="project" value="RGD"/>
</dbReference>
<dbReference type="GO" id="GO:0042632">
    <property type="term" value="P:cholesterol homeostasis"/>
    <property type="evidence" value="ECO:0000266"/>
    <property type="project" value="RGD"/>
</dbReference>
<dbReference type="GO" id="GO:0070508">
    <property type="term" value="P:cholesterol import"/>
    <property type="evidence" value="ECO:0000266"/>
    <property type="project" value="RGD"/>
</dbReference>
<dbReference type="GO" id="GO:0030301">
    <property type="term" value="P:cholesterol transport"/>
    <property type="evidence" value="ECO:0000266"/>
    <property type="project" value="RGD"/>
</dbReference>
<dbReference type="GO" id="GO:0032497">
    <property type="term" value="P:detection of lipopolysaccharide"/>
    <property type="evidence" value="ECO:0000266"/>
    <property type="project" value="RGD"/>
</dbReference>
<dbReference type="GO" id="GO:0001935">
    <property type="term" value="P:endothelial cell proliferation"/>
    <property type="evidence" value="ECO:0000266"/>
    <property type="project" value="RGD"/>
</dbReference>
<dbReference type="GO" id="GO:0034384">
    <property type="term" value="P:high-density lipoprotein particle clearance"/>
    <property type="evidence" value="ECO:0000250"/>
    <property type="project" value="BHF-UCL"/>
</dbReference>
<dbReference type="GO" id="GO:0034375">
    <property type="term" value="P:high-density lipoprotein particle remodeling"/>
    <property type="evidence" value="ECO:0000266"/>
    <property type="project" value="RGD"/>
</dbReference>
<dbReference type="GO" id="GO:0098856">
    <property type="term" value="P:intestinal lipid absorption"/>
    <property type="evidence" value="ECO:0000266"/>
    <property type="project" value="RGD"/>
</dbReference>
<dbReference type="GO" id="GO:0006869">
    <property type="term" value="P:lipid transport"/>
    <property type="evidence" value="ECO:0000315"/>
    <property type="project" value="RGD"/>
</dbReference>
<dbReference type="GO" id="GO:0015920">
    <property type="term" value="P:lipopolysaccharide transport"/>
    <property type="evidence" value="ECO:0000266"/>
    <property type="project" value="RGD"/>
</dbReference>
<dbReference type="GO" id="GO:0034383">
    <property type="term" value="P:low-density lipoprotein particle clearance"/>
    <property type="evidence" value="ECO:0000266"/>
    <property type="project" value="RGD"/>
</dbReference>
<dbReference type="GO" id="GO:0006910">
    <property type="term" value="P:phagocytosis, recognition"/>
    <property type="evidence" value="ECO:0000315"/>
    <property type="project" value="RGD"/>
</dbReference>
<dbReference type="GO" id="GO:0015914">
    <property type="term" value="P:phospholipid transport"/>
    <property type="evidence" value="ECO:0000266"/>
    <property type="project" value="RGD"/>
</dbReference>
<dbReference type="GO" id="GO:0034381">
    <property type="term" value="P:plasma lipoprotein particle clearance"/>
    <property type="evidence" value="ECO:0000318"/>
    <property type="project" value="GO_Central"/>
</dbReference>
<dbReference type="GO" id="GO:0010886">
    <property type="term" value="P:positive regulation of cholesterol storage"/>
    <property type="evidence" value="ECO:0000250"/>
    <property type="project" value="BHF-UCL"/>
</dbReference>
<dbReference type="GO" id="GO:0010867">
    <property type="term" value="P:positive regulation of triglyceride biosynthetic process"/>
    <property type="evidence" value="ECO:0000266"/>
    <property type="project" value="RGD"/>
</dbReference>
<dbReference type="GO" id="GO:0043654">
    <property type="term" value="P:recognition of apoptotic cell"/>
    <property type="evidence" value="ECO:0000314"/>
    <property type="project" value="BHF-UCL"/>
</dbReference>
<dbReference type="GO" id="GO:0050764">
    <property type="term" value="P:regulation of phagocytosis"/>
    <property type="evidence" value="ECO:0000314"/>
    <property type="project" value="RGD"/>
</dbReference>
<dbReference type="GO" id="GO:0010899">
    <property type="term" value="P:regulation of phosphatidylcholine catabolic process"/>
    <property type="evidence" value="ECO:0000266"/>
    <property type="project" value="RGD"/>
</dbReference>
<dbReference type="GO" id="GO:0033552">
    <property type="term" value="P:response to vitamin B3"/>
    <property type="evidence" value="ECO:0000270"/>
    <property type="project" value="RGD"/>
</dbReference>
<dbReference type="GO" id="GO:0043691">
    <property type="term" value="P:reverse cholesterol transport"/>
    <property type="evidence" value="ECO:0000250"/>
    <property type="project" value="BHF-UCL"/>
</dbReference>
<dbReference type="GO" id="GO:0006694">
    <property type="term" value="P:steroid biosynthetic process"/>
    <property type="evidence" value="ECO:0000304"/>
    <property type="project" value="RGD"/>
</dbReference>
<dbReference type="GO" id="GO:0045056">
    <property type="term" value="P:transcytosis"/>
    <property type="evidence" value="ECO:0000266"/>
    <property type="project" value="RGD"/>
</dbReference>
<dbReference type="GO" id="GO:0070328">
    <property type="term" value="P:triglyceride homeostasis"/>
    <property type="evidence" value="ECO:0000266"/>
    <property type="project" value="RGD"/>
</dbReference>
<dbReference type="GO" id="GO:0035461">
    <property type="term" value="P:vitamin transmembrane transport"/>
    <property type="evidence" value="ECO:0000266"/>
    <property type="project" value="RGD"/>
</dbReference>
<dbReference type="InterPro" id="IPR005428">
    <property type="entry name" value="CD36/SCARB1/SNMP1"/>
</dbReference>
<dbReference type="InterPro" id="IPR002159">
    <property type="entry name" value="CD36_fam"/>
</dbReference>
<dbReference type="PANTHER" id="PTHR11923:SF110">
    <property type="entry name" value="SCAVENGER RECEPTOR CLASS B MEMBER 1"/>
    <property type="match status" value="1"/>
</dbReference>
<dbReference type="PANTHER" id="PTHR11923">
    <property type="entry name" value="SCAVENGER RECEPTOR CLASS B TYPE-1 SR-B1"/>
    <property type="match status" value="1"/>
</dbReference>
<dbReference type="Pfam" id="PF01130">
    <property type="entry name" value="CD36"/>
    <property type="match status" value="1"/>
</dbReference>
<dbReference type="PRINTS" id="PR01610">
    <property type="entry name" value="CD36ANTIGEN"/>
</dbReference>
<dbReference type="PRINTS" id="PR01609">
    <property type="entry name" value="CD36FAMILY"/>
</dbReference>
<keyword id="KW-1003">Cell membrane</keyword>
<keyword id="KW-1015">Disulfide bond</keyword>
<keyword id="KW-0325">Glycoprotein</keyword>
<keyword id="KW-0472">Membrane</keyword>
<keyword id="KW-0675">Receptor</keyword>
<keyword id="KW-1185">Reference proteome</keyword>
<keyword id="KW-0812">Transmembrane</keyword>
<keyword id="KW-1133">Transmembrane helix</keyword>
<protein>
    <recommendedName>
        <fullName>Scavenger receptor class B member 1</fullName>
        <shortName>SRB1</shortName>
    </recommendedName>
    <alternativeName>
        <fullName>SR-BI</fullName>
    </alternativeName>
</protein>
<proteinExistence type="evidence at protein level"/>
<evidence type="ECO:0000250" key="1"/>
<evidence type="ECO:0000250" key="2">
    <source>
        <dbReference type="UniProtKB" id="Q61009"/>
    </source>
</evidence>
<evidence type="ECO:0000250" key="3">
    <source>
        <dbReference type="UniProtKB" id="Q8WTV0"/>
    </source>
</evidence>
<evidence type="ECO:0000255" key="4"/>
<evidence type="ECO:0000269" key="5">
    <source>
    </source>
</evidence>
<evidence type="ECO:0000269" key="6">
    <source>
    </source>
</evidence>
<evidence type="ECO:0000305" key="7"/>
<accession>P97943</accession>
<name>SCRB1_RAT</name>
<comment type="function">
    <text evidence="3">Receptor for different ligands such as phospholipids, cholesterol ester, lipoproteins, phosphatidylserine and apoptotic cells. Receptor for HDL, mediating selective uptake of cholesteryl ether and HDL-dependent cholesterol efflux. Also facilitates the flux of free and esterified cholesterol between the cell surface and apoB-containing lipoproteins and modified lipoproteins, although less efficiently than HDL. May be involved in the phagocytosis of apoptotic cells, via its phosphatidylserine binding activity.</text>
</comment>
<comment type="subunit">
    <text evidence="5">The C-terminal region binds to PDZK1.</text>
</comment>
<comment type="subcellular location">
    <subcellularLocation>
        <location evidence="3">Cell membrane</location>
        <topology evidence="1">Multi-pass membrane protein</topology>
    </subcellularLocation>
    <subcellularLocation>
        <location evidence="2">Membrane</location>
        <location evidence="2">Caveola</location>
        <topology evidence="1">Multi-pass membrane protein</topology>
    </subcellularLocation>
    <text evidence="1">Predominantly localized to cholesterol and sphingomyelin-enriched domains within the plasma membrane, called caveolae.</text>
</comment>
<comment type="PTM">
    <text evidence="6">N-glycosylated.</text>
</comment>
<comment type="PTM">
    <text evidence="1">The six cysteines of the extracellular domain are all involved in intramolecular disulfide bonds.</text>
</comment>
<comment type="similarity">
    <text evidence="7">Belongs to the CD36 family.</text>
</comment>
<sequence>MGVSSRARWVALGLGVLGLLCAALGVIMILMVPSLIKQQVLKNVRIDPSSLSFGMWKEIPVPFYLSVYFFEVVNPSEVLNGQKPVVRERGPYVYREFRQKVNITFNDNDTVSYIENRSLRFQPDRSQGSESDYIVLPNILVLGGAVMMEDKPTSLKLLMTLGLVTMGQRAFMNRTVGEILWGYEDPFVNFLSKYFPDMFPIKGKFGLFVGMNDSSSGVFTVFTGVQNFSKIHLVDKWNGLSEVNYWHSEQCNMINGTAGQMWAPFMTPESSLEFFSPEACRSMKLTYQESRVFEGIPTYRFTAPDTLFANGSVYPPNEGFCPCRESGIQNVSTCRFGAPLFLSQPHFYNADPVLSEAVLGLNPDPKEHSLFLDIHPVTGIPMNCSVKMQLSLYIKSVKGVGQTGKIEPVVLPLLWFEQSGMMGGKTLNTFYTQLVLMPQVLHYAQYVLLGLGGLLLLVPIIYQLRSQEKCFLFWSGSKKGSQDKEAMQAYSESLMSPAAKGTVLQEAKL</sequence>
<organism>
    <name type="scientific">Rattus norvegicus</name>
    <name type="common">Rat</name>
    <dbReference type="NCBI Taxonomy" id="10116"/>
    <lineage>
        <taxon>Eukaryota</taxon>
        <taxon>Metazoa</taxon>
        <taxon>Chordata</taxon>
        <taxon>Craniata</taxon>
        <taxon>Vertebrata</taxon>
        <taxon>Euteleostomi</taxon>
        <taxon>Mammalia</taxon>
        <taxon>Eutheria</taxon>
        <taxon>Euarchontoglires</taxon>
        <taxon>Glires</taxon>
        <taxon>Rodentia</taxon>
        <taxon>Myomorpha</taxon>
        <taxon>Muroidea</taxon>
        <taxon>Muridae</taxon>
        <taxon>Murinae</taxon>
        <taxon>Rattus</taxon>
    </lineage>
</organism>
<gene>
    <name type="primary">Scarb1</name>
</gene>
<feature type="chain" id="PRO_0000144163" description="Scavenger receptor class B member 1">
    <location>
        <begin position="1"/>
        <end position="509"/>
    </location>
</feature>
<feature type="topological domain" description="Cytoplasmic" evidence="4">
    <location>
        <begin position="1"/>
        <end position="11"/>
    </location>
</feature>
<feature type="transmembrane region" description="Helical" evidence="4">
    <location>
        <begin position="12"/>
        <end position="32"/>
    </location>
</feature>
<feature type="topological domain" description="Extracellular" evidence="4">
    <location>
        <begin position="33"/>
        <end position="440"/>
    </location>
</feature>
<feature type="transmembrane region" description="Helical" evidence="4">
    <location>
        <begin position="441"/>
        <end position="461"/>
    </location>
</feature>
<feature type="topological domain" description="Cytoplasmic" evidence="4">
    <location>
        <begin position="462"/>
        <end position="509"/>
    </location>
</feature>
<feature type="glycosylation site" description="N-linked (GlcNAc...) asparagine" evidence="4">
    <location>
        <position position="102"/>
    </location>
</feature>
<feature type="glycosylation site" description="N-linked (GlcNAc...) asparagine" evidence="4">
    <location>
        <position position="108"/>
    </location>
</feature>
<feature type="glycosylation site" description="N-linked (GlcNAc...) asparagine" evidence="4">
    <location>
        <position position="116"/>
    </location>
</feature>
<feature type="glycosylation site" description="N-linked (GlcNAc...) asparagine" evidence="4">
    <location>
        <position position="173"/>
    </location>
</feature>
<feature type="glycosylation site" description="N-linked (GlcNAc...) asparagine" evidence="4">
    <location>
        <position position="212"/>
    </location>
</feature>
<feature type="glycosylation site" description="N-linked (GlcNAc...) asparagine" evidence="4">
    <location>
        <position position="227"/>
    </location>
</feature>
<feature type="glycosylation site" description="N-linked (GlcNAc...) asparagine" evidence="4">
    <location>
        <position position="255"/>
    </location>
</feature>
<feature type="glycosylation site" description="N-linked (GlcNAc...) asparagine" evidence="4">
    <location>
        <position position="310"/>
    </location>
</feature>
<feature type="glycosylation site" description="N-linked (GlcNAc...) asparagine" evidence="4">
    <location>
        <position position="330"/>
    </location>
</feature>
<feature type="glycosylation site" description="N-linked (GlcNAc...) asparagine" evidence="4">
    <location>
        <position position="383"/>
    </location>
</feature>
<feature type="disulfide bond" evidence="1">
    <location>
        <begin position="251"/>
        <end position="384"/>
    </location>
</feature>
<reference key="1">
    <citation type="submission" date="1996-11" db="EMBL/GenBank/DDBJ databases">
        <authorList>
            <person name="Johnson S.C.M."/>
            <person name="Svensson P.A."/>
            <person name="Carlsson B."/>
        </authorList>
    </citation>
    <scope>NUCLEOTIDE SEQUENCE [MRNA]</scope>
    <source>
        <strain>Sprague-Dawley</strain>
        <tissue>Liver</tissue>
    </source>
</reference>
<reference key="2">
    <citation type="journal article" date="1997" name="Biochem. Biophys. Res. Commun.">
        <title>Cloning, characterization, and cellular distribution of rat scavenger receptor class B type I (SRBI) in the ovary.</title>
        <authorList>
            <person name="Mizutani T."/>
            <person name="Sonoda Y."/>
            <person name="Minegishi T."/>
            <person name="Wakabayashi K."/>
            <person name="Miyamoto K."/>
        </authorList>
    </citation>
    <scope>NUCLEOTIDE SEQUENCE [MRNA]</scope>
    <source>
        <strain>Wistar</strain>
        <tissue>Ovary</tissue>
    </source>
</reference>
<reference key="3">
    <citation type="journal article" date="2002" name="J. Biol. Chem.">
        <title>Phosphatidylserine binding of class B scavenger receptor type I, a phagocytosis receptor of testicular Sertoli cells.</title>
        <authorList>
            <person name="Kawasaki Y."/>
            <person name="Nakagawa A."/>
            <person name="Nagaosa K."/>
            <person name="Shiratsuchi A."/>
            <person name="Nakanishi Y."/>
        </authorList>
    </citation>
    <scope>NUCLEOTIDE SEQUENCE [MRNA]</scope>
    <scope>GLYCOSYLATION</scope>
    <source>
        <strain>Donryu</strain>
        <tissue>Testis</tissue>
    </source>
</reference>
<reference key="4">
    <citation type="journal article" date="2004" name="Genome Res.">
        <title>The status, quality, and expansion of the NIH full-length cDNA project: the Mammalian Gene Collection (MGC).</title>
        <authorList>
            <consortium name="The MGC Project Team"/>
        </authorList>
    </citation>
    <scope>NUCLEOTIDE SEQUENCE [LARGE SCALE MRNA]</scope>
    <source>
        <tissue>Lung</tissue>
    </source>
</reference>
<reference key="5">
    <citation type="journal article" date="1997" name="Biochem. J.">
        <title>Scavenger receptor B1 (SR-B1) substrates inhibit the selective uptake of high-density-lipoprotein cholesteryl esters by rat parenchymal liver cells.</title>
        <authorList>
            <person name="Fluiter K."/>
            <person name="van Berkel T.J.C."/>
        </authorList>
    </citation>
    <scope>FUNCTION</scope>
</reference>
<reference key="6">
    <citation type="journal article" date="2000" name="Proc. Natl. Acad. Sci. U.S.A.">
        <title>Identification of a PDZ-domain-containing protein that interacts with the scavenger receptor class B type I.</title>
        <authorList>
            <person name="Ikemoto M."/>
            <person name="Arai H."/>
            <person name="Feng D."/>
            <person name="Tanaka K."/>
            <person name="Aoki J."/>
            <person name="Dohmae N."/>
            <person name="Takio K."/>
            <person name="Adachi H."/>
            <person name="Tsujimoto M."/>
            <person name="Inoue K."/>
        </authorList>
    </citation>
    <scope>INTERACTION WITH PDZK1</scope>
    <source>
        <strain>Wistar</strain>
        <tissue>Liver</tissue>
    </source>
</reference>